<reference evidence="11" key="1">
    <citation type="journal article" date="1992" name="Mol. Biochem. Parasitol.">
        <title>Molecular cloning of cDNA and genomic sequences coding for the 35-kilodalton subunit of the galactose-inhibitable lectin of pathogenic Entamoeba histolytica.</title>
        <authorList>
            <person name="Tannich E."/>
            <person name="Ebert F."/>
            <person name="Horstmann R.D."/>
        </authorList>
    </citation>
    <scope>NUCLEOTIDE SEQUENCE [GENOMIC DNA]</scope>
</reference>
<reference evidence="12" key="2">
    <citation type="journal article" date="2005" name="Nature">
        <title>The genome of the protist parasite Entamoeba histolytica.</title>
        <authorList>
            <person name="Loftus B.J."/>
            <person name="Anderson I."/>
            <person name="Davies R."/>
            <person name="Alsmark U.C."/>
            <person name="Samuelson J."/>
            <person name="Amedeo P."/>
            <person name="Roncaglia P."/>
            <person name="Berriman M."/>
            <person name="Hirt R.P."/>
            <person name="Mann B.J."/>
            <person name="Nozaki T."/>
            <person name="Suh B."/>
            <person name="Pop M."/>
            <person name="Duchene M."/>
            <person name="Ackers J."/>
            <person name="Tannich E."/>
            <person name="Leippe M."/>
            <person name="Hofer M."/>
            <person name="Bruchhaus I."/>
            <person name="Willhoeft U."/>
            <person name="Bhattacharya A."/>
            <person name="Chillingworth T."/>
            <person name="Churcher C.M."/>
            <person name="Hance Z."/>
            <person name="Harris B."/>
            <person name="Harris D."/>
            <person name="Jagels K."/>
            <person name="Moule S."/>
            <person name="Mungall K.L."/>
            <person name="Ormond D."/>
            <person name="Squares R."/>
            <person name="Whitehead S."/>
            <person name="Quail M.A."/>
            <person name="Rabbinowitsch E."/>
            <person name="Norbertczak H."/>
            <person name="Price C."/>
            <person name="Wang Z."/>
            <person name="Guillen N."/>
            <person name="Gilchrist C."/>
            <person name="Stroup S.E."/>
            <person name="Bhattacharya S."/>
            <person name="Lohia A."/>
            <person name="Foster P.G."/>
            <person name="Sicheritz-Ponten T."/>
            <person name="Weber C."/>
            <person name="Singh U."/>
            <person name="Mukherjee C."/>
            <person name="El-Sayed N.M.A."/>
            <person name="Petri W.A."/>
            <person name="Clark C.G."/>
            <person name="Embley T.M."/>
            <person name="Barrell B.G."/>
            <person name="Fraser C.M."/>
            <person name="Hall N."/>
        </authorList>
    </citation>
    <scope>NUCLEOTIDE SEQUENCE [LARGE SCALE GENOMIC DNA]</scope>
    <source>
        <strain evidence="12">ATCC 30459 / HM-1:IMSS / ABRM</strain>
    </source>
</reference>
<reference evidence="10" key="3">
    <citation type="journal article" date="1993" name="J. Biol. Chem.">
        <title>Structural analysis of the light subunit of the Entamoeba histolytica galactose-specific adherence lectin.</title>
        <authorList>
            <person name="McCoy J.J."/>
            <person name="Mann B.J."/>
            <person name="Vedvick T.S."/>
            <person name="Pak Y."/>
            <person name="Heimark D.B."/>
            <person name="Petri W.A. Jr."/>
        </authorList>
    </citation>
    <scope>NUCLEOTIDE SEQUENCE [MRNA] OF 11-288</scope>
    <scope>SUBUNIT</scope>
    <scope>SUBCELLULAR LOCATION</scope>
</reference>
<reference key="4">
    <citation type="journal article" date="1996" name="Mol. Microbiol.">
        <title>Physical mapping and expression of gene families encoding the N-acetyl D-galactosamine adherence lectin of Entamoeba histolytica.</title>
        <authorList>
            <person name="Ramakrishnan G."/>
            <person name="Ragland B.D."/>
            <person name="Purdy J.E."/>
            <person name="Mann B.J."/>
        </authorList>
    </citation>
    <scope>NOMENCLATURE</scope>
    <scope>DEVELOPMENTAL STAGE</scope>
</reference>
<reference key="5">
    <citation type="journal article" date="2002" name="Annu. Rev. Microbiol.">
        <title>The bittersweet interface of parasite and host: lectin-carbohydrate interactions during human invasion by the parasite Entamoeba histolytica.</title>
        <authorList>
            <person name="Petri W.A. Jr."/>
            <person name="Haque R."/>
            <person name="Mann B.J."/>
        </authorList>
    </citation>
    <scope>REVIEW</scope>
</reference>
<protein>
    <recommendedName>
        <fullName evidence="7">Galactose/N-acetyl-D-galactosamine lectin light subunit 1</fullName>
        <shortName evidence="7">Gal/GalNAc lectin light subunit 1</shortName>
    </recommendedName>
    <alternativeName>
        <fullName evidence="5">Galactose-inhibitable lectin 35 kDa subunit</fullName>
    </alternativeName>
</protein>
<keyword id="KW-1003">Cell membrane</keyword>
<keyword id="KW-1015">Disulfide bond</keyword>
<keyword id="KW-0325">Glycoprotein</keyword>
<keyword id="KW-0430">Lectin</keyword>
<keyword id="KW-0472">Membrane</keyword>
<keyword id="KW-1185">Reference proteome</keyword>
<keyword id="KW-0732">Signal</keyword>
<evidence type="ECO:0000255" key="1"/>
<evidence type="ECO:0000255" key="2">
    <source>
        <dbReference type="PROSITE-ProRule" id="PRU00498"/>
    </source>
</evidence>
<evidence type="ECO:0000269" key="3">
    <source>
    </source>
</evidence>
<evidence type="ECO:0000269" key="4">
    <source>
    </source>
</evidence>
<evidence type="ECO:0000303" key="5">
    <source>
    </source>
</evidence>
<evidence type="ECO:0000303" key="6">
    <source>
    </source>
</evidence>
<evidence type="ECO:0000305" key="7"/>
<evidence type="ECO:0000305" key="8">
    <source>
    </source>
</evidence>
<evidence type="ECO:0000305" key="9">
    <source>
    </source>
</evidence>
<evidence type="ECO:0000312" key="10">
    <source>
        <dbReference type="EMBL" id="AAA16054.1"/>
    </source>
</evidence>
<evidence type="ECO:0000312" key="11">
    <source>
        <dbReference type="EMBL" id="AAA29099.1"/>
    </source>
</evidence>
<evidence type="ECO:0000312" key="12">
    <source>
        <dbReference type="EMBL" id="EAL50759.1"/>
    </source>
</evidence>
<accession>Q03077</accession>
<accession>A0A175JJM4</accession>
<accession>C4LXZ9</accession>
<dbReference type="EMBL" id="M96024">
    <property type="protein sequence ID" value="AAA29099.1"/>
    <property type="molecule type" value="Genomic_DNA"/>
</dbReference>
<dbReference type="EMBL" id="DS571174">
    <property type="protein sequence ID" value="EAL50759.1"/>
    <property type="molecule type" value="Genomic_DNA"/>
</dbReference>
<dbReference type="EMBL" id="L06065">
    <property type="protein sequence ID" value="AAA16054.1"/>
    <property type="molecule type" value="mRNA"/>
</dbReference>
<dbReference type="PIR" id="A48452">
    <property type="entry name" value="A48452"/>
</dbReference>
<dbReference type="PIR" id="A49505">
    <property type="entry name" value="A49505"/>
</dbReference>
<dbReference type="RefSeq" id="XP_656145.1">
    <property type="nucleotide sequence ID" value="XM_651053.2"/>
</dbReference>
<dbReference type="STRING" id="5759.C4LXZ9"/>
<dbReference type="EnsemblProtists" id="GAT93658">
    <property type="protein sequence ID" value="GAT93658"/>
    <property type="gene ID" value="CL6EHI_035690"/>
</dbReference>
<dbReference type="EnsemblProtists" id="rna_EHI_035690-1">
    <property type="protein sequence ID" value="rna_EHI_035690-1"/>
    <property type="gene ID" value="EHI_035690"/>
</dbReference>
<dbReference type="GeneID" id="3410451"/>
<dbReference type="KEGG" id="ehi:EHI_035690"/>
<dbReference type="VEuPathDB" id="AmoebaDB:EHI5A_013340"/>
<dbReference type="VEuPathDB" id="AmoebaDB:EHI7A_044310"/>
<dbReference type="VEuPathDB" id="AmoebaDB:EHI8A_029950"/>
<dbReference type="VEuPathDB" id="AmoebaDB:EHI8A_227050"/>
<dbReference type="VEuPathDB" id="AmoebaDB:EHI_035690"/>
<dbReference type="VEuPathDB" id="AmoebaDB:KM1_082970"/>
<dbReference type="eggNOG" id="ENOG502RAVA">
    <property type="taxonomic scope" value="Eukaryota"/>
</dbReference>
<dbReference type="HOGENOM" id="CLU_999632_0_0_1"/>
<dbReference type="OMA" id="FMASNEK"/>
<dbReference type="OrthoDB" id="32045at2759"/>
<dbReference type="Proteomes" id="UP000001926">
    <property type="component" value="Partially assembled WGS sequence"/>
</dbReference>
<dbReference type="GO" id="GO:0005886">
    <property type="term" value="C:plasma membrane"/>
    <property type="evidence" value="ECO:0007669"/>
    <property type="project" value="UniProtKB-SubCell"/>
</dbReference>
<dbReference type="GO" id="GO:0030246">
    <property type="term" value="F:carbohydrate binding"/>
    <property type="evidence" value="ECO:0007669"/>
    <property type="project" value="UniProtKB-KW"/>
</dbReference>
<dbReference type="InterPro" id="IPR035310">
    <property type="entry name" value="Gal_GalNac_light_su_1"/>
</dbReference>
<dbReference type="Pfam" id="PF17337">
    <property type="entry name" value="Gal_GalNac_35kD"/>
    <property type="match status" value="1"/>
</dbReference>
<sequence length="288" mass="33595">MIILVLLISYSFGKTQDGKDQLSPNYPYGKMNKDVNFNKPFTSAVDSYQIQQYAENGVFSANQENYVRAKCKTCCRVIFASDYNYKTNTQFTDEDDKKGDERYVMDMEFDDKRSVRFRNGGYEQNILLRPLKQGNELQFFEFAPYRMYTSYAIPKRVHDIRGGANEGATLIIWPKNPPLSDAPGTRNQRFVYVHPYPTEWYPEYNSTTKYTQNGKTVIKTLKWPTYKRHFYLPYRLDVDLCYQARKATDGRSTWTGNKNLNTTSKSYQIIASRCSATEARQIFIPVFA</sequence>
<feature type="signal peptide" evidence="1">
    <location>
        <begin position="1"/>
        <end position="15"/>
    </location>
</feature>
<feature type="chain" id="PRO_0000021327" description="Galactose/N-acetyl-D-galactosamine lectin light subunit 1" evidence="1">
    <location>
        <begin position="16"/>
        <end position="288"/>
    </location>
</feature>
<feature type="glycosylation site" description="N-linked (GlcNAc...) asparagine" evidence="2">
    <location>
        <position position="205"/>
    </location>
</feature>
<feature type="glycosylation site" description="N-linked (GlcNAc...) asparagine" evidence="2">
    <location>
        <position position="261"/>
    </location>
</feature>
<feature type="sequence conflict" description="In Ref. 3; AAA16054." evidence="7" ref="3">
    <original>E</original>
    <variation>K</variation>
    <location>
        <position position="64"/>
    </location>
</feature>
<feature type="sequence conflict" description="In Ref. 1; AAA29099." evidence="7" ref="1">
    <original>G</original>
    <variation>E</variation>
    <location>
        <position position="167"/>
    </location>
</feature>
<comment type="function">
    <text evidence="8">Light subunit of a heterodimeric lectin; the heavy subunit binds galactose and N-acetyl-D-galactosamine of host glycoproteins and thus mediates adhesion to host cells.</text>
</comment>
<comment type="subunit">
    <text evidence="3">Heterodimer composed of a 170 kDa heavy subunit (hgl) and a 31/35 kDa light subunit (lgl); disulfide-linked.</text>
</comment>
<comment type="subcellular location">
    <subcellularLocation>
        <location evidence="9">Cell membrane</location>
        <topology evidence="7">Peripheral membrane protein</topology>
        <orientation evidence="7">Extracellular side</orientation>
    </subcellularLocation>
</comment>
<comment type="developmental stage">
    <text evidence="4">Expressed in trophozoites.</text>
</comment>
<name>LGL1_ENTH1</name>
<gene>
    <name evidence="6" type="primary">lgl1</name>
    <name evidence="12" type="ORF">EHI_035690</name>
</gene>
<proteinExistence type="evidence at protein level"/>
<organism evidence="12">
    <name type="scientific">Entamoeba histolytica (strain ATCC 30459 / HM-1:IMSS / ABRM)</name>
    <dbReference type="NCBI Taxonomy" id="294381"/>
    <lineage>
        <taxon>Eukaryota</taxon>
        <taxon>Amoebozoa</taxon>
        <taxon>Evosea</taxon>
        <taxon>Archamoebae</taxon>
        <taxon>Mastigamoebida</taxon>
        <taxon>Entamoebidae</taxon>
        <taxon>Entamoeba</taxon>
    </lineage>
</organism>